<gene>
    <name type="primary">GLOD5</name>
</gene>
<proteinExistence type="evidence at protein level"/>
<feature type="chain" id="PRO_0000305326" description="Glyoxalase domain-containing protein 5">
    <location>
        <begin position="1"/>
        <end position="160"/>
    </location>
</feature>
<feature type="domain" description="VOC" evidence="1">
    <location>
        <begin position="37"/>
        <end position="157"/>
    </location>
</feature>
<feature type="strand" evidence="3">
    <location>
        <begin position="36"/>
        <end position="46"/>
    </location>
</feature>
<feature type="helix" evidence="3">
    <location>
        <begin position="48"/>
        <end position="59"/>
    </location>
</feature>
<feature type="strand" evidence="3">
    <location>
        <begin position="62"/>
        <end position="66"/>
    </location>
</feature>
<feature type="turn" evidence="3">
    <location>
        <begin position="67"/>
        <end position="69"/>
    </location>
</feature>
<feature type="strand" evidence="3">
    <location>
        <begin position="70"/>
        <end position="75"/>
    </location>
</feature>
<feature type="strand" evidence="3">
    <location>
        <begin position="78"/>
        <end position="84"/>
    </location>
</feature>
<feature type="strand" evidence="3">
    <location>
        <begin position="102"/>
        <end position="106"/>
    </location>
</feature>
<feature type="helix" evidence="3">
    <location>
        <begin position="111"/>
        <end position="120"/>
    </location>
</feature>
<feature type="strand" evidence="3">
    <location>
        <begin position="127"/>
        <end position="134"/>
    </location>
</feature>
<feature type="strand" evidence="3">
    <location>
        <begin position="137"/>
        <end position="145"/>
    </location>
</feature>
<feature type="strand" evidence="3">
    <location>
        <begin position="151"/>
        <end position="156"/>
    </location>
</feature>
<protein>
    <recommendedName>
        <fullName>Glyoxalase domain-containing protein 5</fullName>
    </recommendedName>
</protein>
<sequence length="160" mass="18322">MLRHLPSRLPVKMWGRTLEKQSWRDSSQTPPPCLIRRLDHIVMTVKSIKDTTMFYSKILGMEVMTFKEDRKALCFGDQKFNLHEVGKEFEPKAAHPVPGSLDICLITEVPLEEMIQHLKACDVPIEEGPVPRTGAKGPIMSIYFRDPDRNLIEVSNYISS</sequence>
<keyword id="KW-0002">3D-structure</keyword>
<keyword id="KW-1267">Proteomics identification</keyword>
<keyword id="KW-1185">Reference proteome</keyword>
<dbReference type="EMBL" id="AC115617">
    <property type="status" value="NOT_ANNOTATED_CDS"/>
    <property type="molecule type" value="Genomic_DNA"/>
</dbReference>
<dbReference type="EMBL" id="AF196970">
    <property type="status" value="NOT_ANNOTATED_CDS"/>
    <property type="molecule type" value="Genomic_DNA"/>
</dbReference>
<dbReference type="CCDS" id="CCDS55410.1"/>
<dbReference type="RefSeq" id="NP_001073958.2">
    <property type="nucleotide sequence ID" value="NM_001080489.3"/>
</dbReference>
<dbReference type="PDB" id="3ZW5">
    <property type="method" value="X-ray"/>
    <property type="resolution" value="1.60 A"/>
    <property type="chains" value="A/B=34-157"/>
</dbReference>
<dbReference type="PDBsum" id="3ZW5"/>
<dbReference type="SMR" id="A6NK44"/>
<dbReference type="BioGRID" id="134231">
    <property type="interactions" value="1"/>
</dbReference>
<dbReference type="FunCoup" id="A6NK44">
    <property type="interactions" value="22"/>
</dbReference>
<dbReference type="IntAct" id="A6NK44">
    <property type="interactions" value="1"/>
</dbReference>
<dbReference type="STRING" id="9606.ENSP00000302552"/>
<dbReference type="GlyGen" id="A6NK44">
    <property type="glycosylation" value="1 site, 1 O-linked glycan (1 site)"/>
</dbReference>
<dbReference type="iPTMnet" id="A6NK44"/>
<dbReference type="PhosphoSitePlus" id="A6NK44"/>
<dbReference type="BioMuta" id="GLOD5"/>
<dbReference type="MassIVE" id="A6NK44"/>
<dbReference type="PaxDb" id="9606-ENSP00000302552"/>
<dbReference type="PeptideAtlas" id="A6NK44"/>
<dbReference type="ProteomicsDB" id="1376"/>
<dbReference type="Antibodypedia" id="546">
    <property type="antibodies" value="8 antibodies from 7 providers"/>
</dbReference>
<dbReference type="DNASU" id="392465"/>
<dbReference type="Ensembl" id="ENST00000303227.11">
    <property type="protein sequence ID" value="ENSP00000302552.6"/>
    <property type="gene ID" value="ENSG00000171433.12"/>
</dbReference>
<dbReference type="GeneID" id="392465"/>
<dbReference type="KEGG" id="hsa:392465"/>
<dbReference type="MANE-Select" id="ENST00000303227.11">
    <property type="protein sequence ID" value="ENSP00000302552.6"/>
    <property type="RefSeq nucleotide sequence ID" value="NM_001080489.3"/>
    <property type="RefSeq protein sequence ID" value="NP_001073958.2"/>
</dbReference>
<dbReference type="UCSC" id="uc011mmh.3">
    <property type="organism name" value="human"/>
</dbReference>
<dbReference type="AGR" id="HGNC:33358"/>
<dbReference type="CTD" id="392465"/>
<dbReference type="DisGeNET" id="392465"/>
<dbReference type="GeneCards" id="GLOD5"/>
<dbReference type="HGNC" id="HGNC:33358">
    <property type="gene designation" value="GLOD5"/>
</dbReference>
<dbReference type="HPA" id="ENSG00000171433">
    <property type="expression patterns" value="Group enriched (epididymis, intestine, kidney, liver)"/>
</dbReference>
<dbReference type="MIM" id="301112">
    <property type="type" value="gene"/>
</dbReference>
<dbReference type="neXtProt" id="NX_A6NK44"/>
<dbReference type="OpenTargets" id="ENSG00000171433"/>
<dbReference type="VEuPathDB" id="HostDB:ENSG00000171433"/>
<dbReference type="eggNOG" id="ENOG502RZMP">
    <property type="taxonomic scope" value="Eukaryota"/>
</dbReference>
<dbReference type="GeneTree" id="ENSGT00940000153941"/>
<dbReference type="InParanoid" id="A6NK44"/>
<dbReference type="OMA" id="FGTHKIN"/>
<dbReference type="OrthoDB" id="5371818at2759"/>
<dbReference type="PAN-GO" id="A6NK44">
    <property type="GO annotations" value="0 GO annotations based on evolutionary models"/>
</dbReference>
<dbReference type="PhylomeDB" id="A6NK44"/>
<dbReference type="TreeFam" id="TF300075"/>
<dbReference type="PathwayCommons" id="A6NK44"/>
<dbReference type="SignaLink" id="A6NK44"/>
<dbReference type="BioGRID-ORCS" id="392465">
    <property type="hits" value="11 hits in 716 CRISPR screens"/>
</dbReference>
<dbReference type="EvolutionaryTrace" id="A6NK44"/>
<dbReference type="GenomeRNAi" id="392465"/>
<dbReference type="Pharos" id="A6NK44">
    <property type="development level" value="Tdark"/>
</dbReference>
<dbReference type="PRO" id="PR:A6NK44"/>
<dbReference type="Proteomes" id="UP000005640">
    <property type="component" value="Chromosome X"/>
</dbReference>
<dbReference type="RNAct" id="A6NK44">
    <property type="molecule type" value="protein"/>
</dbReference>
<dbReference type="Bgee" id="ENSG00000171433">
    <property type="expression patterns" value="Expressed in male germ line stem cell (sensu Vertebrata) in testis and 76 other cell types or tissues"/>
</dbReference>
<dbReference type="ExpressionAtlas" id="A6NK44">
    <property type="expression patterns" value="baseline and differential"/>
</dbReference>
<dbReference type="CDD" id="cd07253">
    <property type="entry name" value="GLOD5"/>
    <property type="match status" value="1"/>
</dbReference>
<dbReference type="Gene3D" id="3.10.180.10">
    <property type="entry name" value="2,3-Dihydroxybiphenyl 1,2-Dioxygenase, domain 1"/>
    <property type="match status" value="1"/>
</dbReference>
<dbReference type="InterPro" id="IPR029068">
    <property type="entry name" value="Glyas_Bleomycin-R_OHBP_Dase"/>
</dbReference>
<dbReference type="InterPro" id="IPR004360">
    <property type="entry name" value="Glyas_Fos-R_dOase_dom"/>
</dbReference>
<dbReference type="InterPro" id="IPR050383">
    <property type="entry name" value="GlyoxalaseI/FosfomycinResist"/>
</dbReference>
<dbReference type="InterPro" id="IPR037523">
    <property type="entry name" value="VOC"/>
</dbReference>
<dbReference type="PANTHER" id="PTHR21366:SF14">
    <property type="entry name" value="GLYOXALASE DOMAIN-CONTAINING PROTEIN 5"/>
    <property type="match status" value="1"/>
</dbReference>
<dbReference type="PANTHER" id="PTHR21366">
    <property type="entry name" value="GLYOXALASE FAMILY PROTEIN"/>
    <property type="match status" value="1"/>
</dbReference>
<dbReference type="Pfam" id="PF00903">
    <property type="entry name" value="Glyoxalase"/>
    <property type="match status" value="1"/>
</dbReference>
<dbReference type="SUPFAM" id="SSF54593">
    <property type="entry name" value="Glyoxalase/Bleomycin resistance protein/Dihydroxybiphenyl dioxygenase"/>
    <property type="match status" value="1"/>
</dbReference>
<dbReference type="PROSITE" id="PS51819">
    <property type="entry name" value="VOC"/>
    <property type="match status" value="1"/>
</dbReference>
<name>GLOD5_HUMAN</name>
<evidence type="ECO:0000255" key="1">
    <source>
        <dbReference type="PROSITE-ProRule" id="PRU01163"/>
    </source>
</evidence>
<evidence type="ECO:0000305" key="2"/>
<evidence type="ECO:0007829" key="3">
    <source>
        <dbReference type="PDB" id="3ZW5"/>
    </source>
</evidence>
<comment type="similarity">
    <text evidence="2">Belongs to the glyoxalase I family.</text>
</comment>
<comment type="caution">
    <text evidence="2">It is uncertain whether Met-1 or Met-13 is the initiator.</text>
</comment>
<reference key="1">
    <citation type="journal article" date="2005" name="Nature">
        <title>The DNA sequence of the human X chromosome.</title>
        <authorList>
            <person name="Ross M.T."/>
            <person name="Grafham D.V."/>
            <person name="Coffey A.J."/>
            <person name="Scherer S."/>
            <person name="McLay K."/>
            <person name="Muzny D."/>
            <person name="Platzer M."/>
            <person name="Howell G.R."/>
            <person name="Burrows C."/>
            <person name="Bird C.P."/>
            <person name="Frankish A."/>
            <person name="Lovell F.L."/>
            <person name="Howe K.L."/>
            <person name="Ashurst J.L."/>
            <person name="Fulton R.S."/>
            <person name="Sudbrak R."/>
            <person name="Wen G."/>
            <person name="Jones M.C."/>
            <person name="Hurles M.E."/>
            <person name="Andrews T.D."/>
            <person name="Scott C.E."/>
            <person name="Searle S."/>
            <person name="Ramser J."/>
            <person name="Whittaker A."/>
            <person name="Deadman R."/>
            <person name="Carter N.P."/>
            <person name="Hunt S.E."/>
            <person name="Chen R."/>
            <person name="Cree A."/>
            <person name="Gunaratne P."/>
            <person name="Havlak P."/>
            <person name="Hodgson A."/>
            <person name="Metzker M.L."/>
            <person name="Richards S."/>
            <person name="Scott G."/>
            <person name="Steffen D."/>
            <person name="Sodergren E."/>
            <person name="Wheeler D.A."/>
            <person name="Worley K.C."/>
            <person name="Ainscough R."/>
            <person name="Ambrose K.D."/>
            <person name="Ansari-Lari M.A."/>
            <person name="Aradhya S."/>
            <person name="Ashwell R.I."/>
            <person name="Babbage A.K."/>
            <person name="Bagguley C.L."/>
            <person name="Ballabio A."/>
            <person name="Banerjee R."/>
            <person name="Barker G.E."/>
            <person name="Barlow K.F."/>
            <person name="Barrett I.P."/>
            <person name="Bates K.N."/>
            <person name="Beare D.M."/>
            <person name="Beasley H."/>
            <person name="Beasley O."/>
            <person name="Beck A."/>
            <person name="Bethel G."/>
            <person name="Blechschmidt K."/>
            <person name="Brady N."/>
            <person name="Bray-Allen S."/>
            <person name="Bridgeman A.M."/>
            <person name="Brown A.J."/>
            <person name="Brown M.J."/>
            <person name="Bonnin D."/>
            <person name="Bruford E.A."/>
            <person name="Buhay C."/>
            <person name="Burch P."/>
            <person name="Burford D."/>
            <person name="Burgess J."/>
            <person name="Burrill W."/>
            <person name="Burton J."/>
            <person name="Bye J.M."/>
            <person name="Carder C."/>
            <person name="Carrel L."/>
            <person name="Chako J."/>
            <person name="Chapman J.C."/>
            <person name="Chavez D."/>
            <person name="Chen E."/>
            <person name="Chen G."/>
            <person name="Chen Y."/>
            <person name="Chen Z."/>
            <person name="Chinault C."/>
            <person name="Ciccodicola A."/>
            <person name="Clark S.Y."/>
            <person name="Clarke G."/>
            <person name="Clee C.M."/>
            <person name="Clegg S."/>
            <person name="Clerc-Blankenburg K."/>
            <person name="Clifford K."/>
            <person name="Cobley V."/>
            <person name="Cole C.G."/>
            <person name="Conquer J.S."/>
            <person name="Corby N."/>
            <person name="Connor R.E."/>
            <person name="David R."/>
            <person name="Davies J."/>
            <person name="Davis C."/>
            <person name="Davis J."/>
            <person name="Delgado O."/>
            <person name="Deshazo D."/>
            <person name="Dhami P."/>
            <person name="Ding Y."/>
            <person name="Dinh H."/>
            <person name="Dodsworth S."/>
            <person name="Draper H."/>
            <person name="Dugan-Rocha S."/>
            <person name="Dunham A."/>
            <person name="Dunn M."/>
            <person name="Durbin K.J."/>
            <person name="Dutta I."/>
            <person name="Eades T."/>
            <person name="Ellwood M."/>
            <person name="Emery-Cohen A."/>
            <person name="Errington H."/>
            <person name="Evans K.L."/>
            <person name="Faulkner L."/>
            <person name="Francis F."/>
            <person name="Frankland J."/>
            <person name="Fraser A.E."/>
            <person name="Galgoczy P."/>
            <person name="Gilbert J."/>
            <person name="Gill R."/>
            <person name="Gloeckner G."/>
            <person name="Gregory S.G."/>
            <person name="Gribble S."/>
            <person name="Griffiths C."/>
            <person name="Grocock R."/>
            <person name="Gu Y."/>
            <person name="Gwilliam R."/>
            <person name="Hamilton C."/>
            <person name="Hart E.A."/>
            <person name="Hawes A."/>
            <person name="Heath P.D."/>
            <person name="Heitmann K."/>
            <person name="Hennig S."/>
            <person name="Hernandez J."/>
            <person name="Hinzmann B."/>
            <person name="Ho S."/>
            <person name="Hoffs M."/>
            <person name="Howden P.J."/>
            <person name="Huckle E.J."/>
            <person name="Hume J."/>
            <person name="Hunt P.J."/>
            <person name="Hunt A.R."/>
            <person name="Isherwood J."/>
            <person name="Jacob L."/>
            <person name="Johnson D."/>
            <person name="Jones S."/>
            <person name="de Jong P.J."/>
            <person name="Joseph S.S."/>
            <person name="Keenan S."/>
            <person name="Kelly S."/>
            <person name="Kershaw J.K."/>
            <person name="Khan Z."/>
            <person name="Kioschis P."/>
            <person name="Klages S."/>
            <person name="Knights A.J."/>
            <person name="Kosiura A."/>
            <person name="Kovar-Smith C."/>
            <person name="Laird G.K."/>
            <person name="Langford C."/>
            <person name="Lawlor S."/>
            <person name="Leversha M."/>
            <person name="Lewis L."/>
            <person name="Liu W."/>
            <person name="Lloyd C."/>
            <person name="Lloyd D.M."/>
            <person name="Loulseged H."/>
            <person name="Loveland J.E."/>
            <person name="Lovell J.D."/>
            <person name="Lozado R."/>
            <person name="Lu J."/>
            <person name="Lyne R."/>
            <person name="Ma J."/>
            <person name="Maheshwari M."/>
            <person name="Matthews L.H."/>
            <person name="McDowall J."/>
            <person name="McLaren S."/>
            <person name="McMurray A."/>
            <person name="Meidl P."/>
            <person name="Meitinger T."/>
            <person name="Milne S."/>
            <person name="Miner G."/>
            <person name="Mistry S.L."/>
            <person name="Morgan M."/>
            <person name="Morris S."/>
            <person name="Mueller I."/>
            <person name="Mullikin J.C."/>
            <person name="Nguyen N."/>
            <person name="Nordsiek G."/>
            <person name="Nyakatura G."/>
            <person name="O'dell C.N."/>
            <person name="Okwuonu G."/>
            <person name="Palmer S."/>
            <person name="Pandian R."/>
            <person name="Parker D."/>
            <person name="Parrish J."/>
            <person name="Pasternak S."/>
            <person name="Patel D."/>
            <person name="Pearce A.V."/>
            <person name="Pearson D.M."/>
            <person name="Pelan S.E."/>
            <person name="Perez L."/>
            <person name="Porter K.M."/>
            <person name="Ramsey Y."/>
            <person name="Reichwald K."/>
            <person name="Rhodes S."/>
            <person name="Ridler K.A."/>
            <person name="Schlessinger D."/>
            <person name="Schueler M.G."/>
            <person name="Sehra H.K."/>
            <person name="Shaw-Smith C."/>
            <person name="Shen H."/>
            <person name="Sheridan E.M."/>
            <person name="Shownkeen R."/>
            <person name="Skuce C.D."/>
            <person name="Smith M.L."/>
            <person name="Sotheran E.C."/>
            <person name="Steingruber H.E."/>
            <person name="Steward C.A."/>
            <person name="Storey R."/>
            <person name="Swann R.M."/>
            <person name="Swarbreck D."/>
            <person name="Tabor P.E."/>
            <person name="Taudien S."/>
            <person name="Taylor T."/>
            <person name="Teague B."/>
            <person name="Thomas K."/>
            <person name="Thorpe A."/>
            <person name="Timms K."/>
            <person name="Tracey A."/>
            <person name="Trevanion S."/>
            <person name="Tromans A.C."/>
            <person name="d'Urso M."/>
            <person name="Verduzco D."/>
            <person name="Villasana D."/>
            <person name="Waldron L."/>
            <person name="Wall M."/>
            <person name="Wang Q."/>
            <person name="Warren J."/>
            <person name="Warry G.L."/>
            <person name="Wei X."/>
            <person name="West A."/>
            <person name="Whitehead S.L."/>
            <person name="Whiteley M.N."/>
            <person name="Wilkinson J.E."/>
            <person name="Willey D.L."/>
            <person name="Williams G."/>
            <person name="Williams L."/>
            <person name="Williamson A."/>
            <person name="Williamson H."/>
            <person name="Wilming L."/>
            <person name="Woodmansey R.L."/>
            <person name="Wray P.W."/>
            <person name="Yen J."/>
            <person name="Zhang J."/>
            <person name="Zhou J."/>
            <person name="Zoghbi H."/>
            <person name="Zorilla S."/>
            <person name="Buck D."/>
            <person name="Reinhardt R."/>
            <person name="Poustka A."/>
            <person name="Rosenthal A."/>
            <person name="Lehrach H."/>
            <person name="Meindl A."/>
            <person name="Minx P.J."/>
            <person name="Hillier L.W."/>
            <person name="Willard H.F."/>
            <person name="Wilson R.K."/>
            <person name="Waterston R.H."/>
            <person name="Rice C.M."/>
            <person name="Vaudin M."/>
            <person name="Coulson A."/>
            <person name="Nelson D.L."/>
            <person name="Weinstock G."/>
            <person name="Sulston J.E."/>
            <person name="Durbin R.M."/>
            <person name="Hubbard T."/>
            <person name="Gibbs R.A."/>
            <person name="Beck S."/>
            <person name="Rogers J."/>
            <person name="Bentley D.R."/>
        </authorList>
    </citation>
    <scope>NUCLEOTIDE SEQUENCE [LARGE SCALE GENOMIC DNA]</scope>
</reference>
<reference key="2">
    <citation type="submission" date="2011-08" db="PDB data bank">
        <title>Crystal structure of the human glyoxalase domain-containing protein 5.</title>
        <authorList>
            <consortium name="Structural genomics consortium (SGC)"/>
        </authorList>
    </citation>
    <scope>X-RAY CRYSTALLOGRAPHY (1.6 ANGSTROMS) OF 34-157</scope>
</reference>
<organism>
    <name type="scientific">Homo sapiens</name>
    <name type="common">Human</name>
    <dbReference type="NCBI Taxonomy" id="9606"/>
    <lineage>
        <taxon>Eukaryota</taxon>
        <taxon>Metazoa</taxon>
        <taxon>Chordata</taxon>
        <taxon>Craniata</taxon>
        <taxon>Vertebrata</taxon>
        <taxon>Euteleostomi</taxon>
        <taxon>Mammalia</taxon>
        <taxon>Eutheria</taxon>
        <taxon>Euarchontoglires</taxon>
        <taxon>Primates</taxon>
        <taxon>Haplorrhini</taxon>
        <taxon>Catarrhini</taxon>
        <taxon>Hominidae</taxon>
        <taxon>Homo</taxon>
    </lineage>
</organism>
<accession>A6NK44</accession>